<proteinExistence type="evidence at transcript level"/>
<reference key="1">
    <citation type="journal article" date="1994" name="Biochem. Biophys. Res. Commun.">
        <title>Molecular cloning and DNA sequence of rat amelogenin and a comparative analysis of mammalian amelogenin protein sequence divergence.</title>
        <authorList>
            <person name="Bonass W.A."/>
            <person name="Robinson P.A."/>
            <person name="Kirkham J."/>
            <person name="Shore R.C."/>
            <person name="Robinson C."/>
        </authorList>
    </citation>
    <scope>NUCLEOTIDE SEQUENCE [MRNA]</scope>
    <source>
        <strain>Wistar</strain>
        <tissue>Enamel organ</tissue>
    </source>
</reference>
<reference key="2">
    <citation type="journal article" date="1994" name="Biochim. Biophys. Acta">
        <title>Isolation and characterisation of an alternatively-spliced rat amelogenin cDNA: LRAP -- a highly conserved, functional alternatively-spliced amelogenin?</title>
        <authorList>
            <person name="Bonass W.A."/>
            <person name="Kirkham J."/>
            <person name="Brookes S.J."/>
            <person name="Shore R.C."/>
            <person name="Robinson C."/>
        </authorList>
    </citation>
    <scope>NUCLEOTIDE SEQUENCE [MRNA] (ISOFORM 1)</scope>
    <source>
        <strain>Wistar</strain>
        <tissue>Enamel organ</tissue>
    </source>
</reference>
<reference key="3">
    <citation type="submission" date="1996-08" db="EMBL/GenBank/DDBJ databases">
        <title>Rat amelogenin cDNA containing exon 4.</title>
        <authorList>
            <person name="Bonass W.A."/>
        </authorList>
    </citation>
    <scope>NUCLEOTIDE SEQUENCE [MRNA] (ISOFORM 4)</scope>
</reference>
<reference key="4">
    <citation type="journal article" date="1995" name="J. Dent. Res.">
        <title>Alternative splicing of amelogenin mRNA from rat incisor ameloblasts.</title>
        <authorList>
            <person name="Li R."/>
            <person name="Li W."/>
            <person name="DenBesten P.K."/>
        </authorList>
    </citation>
    <scope>NUCLEOTIDE SEQUENCE [MRNA] (ISOFORMS 5 AND 6)</scope>
    <source>
        <tissue>Tooth enamel</tissue>
    </source>
</reference>
<accession>P63278</accession>
<accession>P45559</accession>
<accession>Q62945</accession>
<accession>Q63640</accession>
<accession>Q78E56</accession>
<protein>
    <recommendedName>
        <fullName>Amelogenin, X isoform</fullName>
    </recommendedName>
    <alternativeName>
        <fullName>Leucine-rich amelogenin peptide</fullName>
        <shortName>LRAP</shortName>
    </alternativeName>
</protein>
<feature type="signal peptide" evidence="1">
    <location>
        <begin position="1"/>
        <end position="16"/>
    </location>
</feature>
<feature type="chain" id="PRO_0000001202" description="Amelogenin, X isoform">
    <location>
        <begin position="17"/>
        <end position="210"/>
    </location>
</feature>
<feature type="region of interest" description="Disordered" evidence="5">
    <location>
        <begin position="109"/>
        <end position="187"/>
    </location>
</feature>
<feature type="compositionally biased region" description="Low complexity" evidence="5">
    <location>
        <begin position="109"/>
        <end position="119"/>
    </location>
</feature>
<feature type="compositionally biased region" description="Low complexity" evidence="5">
    <location>
        <begin position="136"/>
        <end position="169"/>
    </location>
</feature>
<feature type="compositionally biased region" description="Pro residues" evidence="5">
    <location>
        <begin position="170"/>
        <end position="179"/>
    </location>
</feature>
<feature type="modified residue" description="Phosphoserine" evidence="2">
    <location>
        <position position="32"/>
    </location>
</feature>
<feature type="splice variant" id="VSP_011689" description="In isoform 1, isoform 2, isoform 3, isoform 5 and isoform 6." evidence="6 7">
    <location>
        <begin position="35"/>
        <end position="48"/>
    </location>
</feature>
<feature type="splice variant" id="VSP_011690" description="In isoform 2." evidence="8">
    <location>
        <begin position="64"/>
        <end position="184"/>
    </location>
</feature>
<feature type="splice variant" id="VSP_011691" description="In isoform 3 and isoform 6." evidence="7">
    <location>
        <begin position="64"/>
        <end position="87"/>
    </location>
</feature>
<feature type="splice variant" id="VSP_011692" description="In isoform 5 and isoform 6." evidence="7">
    <original>D</original>
    <variation>AFSPMKWYQGTARHPLNMETTTEK</variation>
    <location>
        <position position="210"/>
    </location>
</feature>
<feature type="sequence conflict" description="In Ref. 4; AAB02691." evidence="8" ref="4">
    <original>Y</original>
    <variation>H</variation>
    <location>
        <position position="64"/>
    </location>
</feature>
<dbReference type="EMBL" id="U01245">
    <property type="protein sequence ID" value="AAA20491.1"/>
    <property type="molecule type" value="mRNA"/>
</dbReference>
<dbReference type="EMBL" id="U07054">
    <property type="protein sequence ID" value="AAA61964.1"/>
    <property type="molecule type" value="mRNA"/>
</dbReference>
<dbReference type="EMBL" id="U67130">
    <property type="protein sequence ID" value="AAB06753.1"/>
    <property type="molecule type" value="mRNA"/>
</dbReference>
<dbReference type="EMBL" id="U51195">
    <property type="protein sequence ID" value="AAB02691.1"/>
    <property type="molecule type" value="mRNA"/>
</dbReference>
<dbReference type="EMBL" id="U60562">
    <property type="protein sequence ID" value="AAB03481.1"/>
    <property type="molecule type" value="mRNA"/>
</dbReference>
<dbReference type="PIR" id="JC2391">
    <property type="entry name" value="JC2391"/>
</dbReference>
<dbReference type="RefSeq" id="NP_001258002.1">
    <molecule id="P63278-6"/>
    <property type="nucleotide sequence ID" value="NM_001271073.1"/>
</dbReference>
<dbReference type="RefSeq" id="NP_001258003.1">
    <molecule id="P63278-5"/>
    <property type="nucleotide sequence ID" value="NM_001271074.1"/>
</dbReference>
<dbReference type="RefSeq" id="NP_001258004.1">
    <property type="nucleotide sequence ID" value="NM_001271075.1"/>
</dbReference>
<dbReference type="RefSeq" id="NP_001258005.1">
    <property type="nucleotide sequence ID" value="NM_001271076.1"/>
</dbReference>
<dbReference type="RefSeq" id="NP_001258006.1">
    <molecule id="P63278-1"/>
    <property type="nucleotide sequence ID" value="NM_001271077.1"/>
</dbReference>
<dbReference type="RefSeq" id="NP_001258007.1">
    <molecule id="P63278-2"/>
    <property type="nucleotide sequence ID" value="NM_001271078.1"/>
</dbReference>
<dbReference type="RefSeq" id="NP_062027.1">
    <molecule id="P63278-4"/>
    <property type="nucleotide sequence ID" value="NM_019154.2"/>
</dbReference>
<dbReference type="FunCoup" id="P63278">
    <property type="interactions" value="8"/>
</dbReference>
<dbReference type="IntAct" id="P63278">
    <property type="interactions" value="65"/>
</dbReference>
<dbReference type="STRING" id="10116.ENSRNOP00000048382"/>
<dbReference type="PhosphoSitePlus" id="P63278"/>
<dbReference type="PaxDb" id="10116-ENSRNOP00000048382"/>
<dbReference type="Ensembl" id="ENSRNOT00000052176.5">
    <molecule id="P63278-5"/>
    <property type="protein sequence ID" value="ENSRNOP00000048382.2"/>
    <property type="gene ID" value="ENSRNOG00000003965.9"/>
</dbReference>
<dbReference type="Ensembl" id="ENSRNOT00000078843.2">
    <molecule id="P63278-4"/>
    <property type="protein sequence ID" value="ENSRNOP00000069787.2"/>
    <property type="gene ID" value="ENSRNOG00000003965.9"/>
</dbReference>
<dbReference type="GeneID" id="29160"/>
<dbReference type="KEGG" id="rno:29160"/>
<dbReference type="AGR" id="RGD:2107"/>
<dbReference type="CTD" id="265"/>
<dbReference type="RGD" id="2107">
    <property type="gene designation" value="Amelx"/>
</dbReference>
<dbReference type="eggNOG" id="ENOG502S4XP">
    <property type="taxonomic scope" value="Eukaryota"/>
</dbReference>
<dbReference type="GeneTree" id="ENSGT00390000009151"/>
<dbReference type="InParanoid" id="P63278"/>
<dbReference type="OMA" id="LPIQPYE"/>
<dbReference type="OrthoDB" id="9030267at2759"/>
<dbReference type="PhylomeDB" id="P63278"/>
<dbReference type="TreeFam" id="TF337092"/>
<dbReference type="Reactome" id="R-RNO-381426">
    <property type="pathway name" value="Regulation of Insulin-like Growth Factor (IGF) transport and uptake by Insulin-like Growth Factor Binding Proteins (IGFBPs)"/>
</dbReference>
<dbReference type="Reactome" id="R-RNO-8957275">
    <property type="pathway name" value="Post-translational protein phosphorylation"/>
</dbReference>
<dbReference type="PRO" id="PR:P63278"/>
<dbReference type="Proteomes" id="UP000002494">
    <property type="component" value="Chromosome X"/>
</dbReference>
<dbReference type="Bgee" id="ENSRNOG00000003965">
    <property type="expression patterns" value="Expressed in skeletal muscle tissue and 2 other cell types or tissues"/>
</dbReference>
<dbReference type="ExpressionAtlas" id="P63278">
    <property type="expression patterns" value="baseline and differential"/>
</dbReference>
<dbReference type="GO" id="GO:0005604">
    <property type="term" value="C:basement membrane"/>
    <property type="evidence" value="ECO:0000266"/>
    <property type="project" value="RGD"/>
</dbReference>
<dbReference type="GO" id="GO:0009986">
    <property type="term" value="C:cell surface"/>
    <property type="evidence" value="ECO:0000266"/>
    <property type="project" value="RGD"/>
</dbReference>
<dbReference type="GO" id="GO:0062023">
    <property type="term" value="C:collagen-containing extracellular matrix"/>
    <property type="evidence" value="ECO:0000318"/>
    <property type="project" value="GO_Central"/>
</dbReference>
<dbReference type="GO" id="GO:0030139">
    <property type="term" value="C:endocytic vesicle"/>
    <property type="evidence" value="ECO:0000314"/>
    <property type="project" value="RGD"/>
</dbReference>
<dbReference type="GO" id="GO:0005576">
    <property type="term" value="C:extracellular region"/>
    <property type="evidence" value="ECO:0007669"/>
    <property type="project" value="UniProtKB-KW"/>
</dbReference>
<dbReference type="GO" id="GO:0032991">
    <property type="term" value="C:protein-containing complex"/>
    <property type="evidence" value="ECO:0000266"/>
    <property type="project" value="RGD"/>
</dbReference>
<dbReference type="GO" id="GO:0099080">
    <property type="term" value="C:supramolecular complex"/>
    <property type="evidence" value="ECO:0000266"/>
    <property type="project" value="RGD"/>
</dbReference>
<dbReference type="GO" id="GO:0005509">
    <property type="term" value="F:calcium ion binding"/>
    <property type="evidence" value="ECO:0000266"/>
    <property type="project" value="RGD"/>
</dbReference>
<dbReference type="GO" id="GO:0008083">
    <property type="term" value="F:growth factor activity"/>
    <property type="evidence" value="ECO:0000266"/>
    <property type="project" value="RGD"/>
</dbReference>
<dbReference type="GO" id="GO:0046848">
    <property type="term" value="F:hydroxyapatite binding"/>
    <property type="evidence" value="ECO:0000266"/>
    <property type="project" value="RGD"/>
</dbReference>
<dbReference type="GO" id="GO:0042802">
    <property type="term" value="F:identical protein binding"/>
    <property type="evidence" value="ECO:0000314"/>
    <property type="project" value="RGD"/>
</dbReference>
<dbReference type="GO" id="GO:0042803">
    <property type="term" value="F:protein homodimerization activity"/>
    <property type="evidence" value="ECO:0000266"/>
    <property type="project" value="RGD"/>
</dbReference>
<dbReference type="GO" id="GO:0031402">
    <property type="term" value="F:sodium ion binding"/>
    <property type="evidence" value="ECO:0000266"/>
    <property type="project" value="RGD"/>
</dbReference>
<dbReference type="GO" id="GO:0030345">
    <property type="term" value="F:structural constituent of tooth enamel"/>
    <property type="evidence" value="ECO:0000314"/>
    <property type="project" value="RGD"/>
</dbReference>
<dbReference type="GO" id="GO:0097186">
    <property type="term" value="P:amelogenesis"/>
    <property type="evidence" value="ECO:0000266"/>
    <property type="project" value="RGD"/>
</dbReference>
<dbReference type="GO" id="GO:0007155">
    <property type="term" value="P:cell adhesion"/>
    <property type="evidence" value="ECO:0000266"/>
    <property type="project" value="RGD"/>
</dbReference>
<dbReference type="GO" id="GO:0070166">
    <property type="term" value="P:enamel mineralization"/>
    <property type="evidence" value="ECO:0000266"/>
    <property type="project" value="RGD"/>
</dbReference>
<dbReference type="GO" id="GO:0042475">
    <property type="term" value="P:odontogenesis of dentin-containing tooth"/>
    <property type="evidence" value="ECO:0000266"/>
    <property type="project" value="RGD"/>
</dbReference>
<dbReference type="GO" id="GO:0042127">
    <property type="term" value="P:regulation of cell population proliferation"/>
    <property type="evidence" value="ECO:0000266"/>
    <property type="project" value="RGD"/>
</dbReference>
<dbReference type="GO" id="GO:0051592">
    <property type="term" value="P:response to calcium ion"/>
    <property type="evidence" value="ECO:0000270"/>
    <property type="project" value="RGD"/>
</dbReference>
<dbReference type="GO" id="GO:0007584">
    <property type="term" value="P:response to nutrient"/>
    <property type="evidence" value="ECO:0000270"/>
    <property type="project" value="RGD"/>
</dbReference>
<dbReference type="GO" id="GO:0009410">
    <property type="term" value="P:response to xenobiotic stimulus"/>
    <property type="evidence" value="ECO:0000270"/>
    <property type="project" value="RGD"/>
</dbReference>
<dbReference type="GO" id="GO:0034505">
    <property type="term" value="P:tooth mineralization"/>
    <property type="evidence" value="ECO:0000266"/>
    <property type="project" value="RGD"/>
</dbReference>
<dbReference type="InterPro" id="IPR004116">
    <property type="entry name" value="Amelogenin"/>
</dbReference>
<dbReference type="PANTHER" id="PTHR46794:SF2">
    <property type="entry name" value="AMELOGENIN, X ISOFORM"/>
    <property type="match status" value="1"/>
</dbReference>
<dbReference type="PANTHER" id="PTHR46794">
    <property type="entry name" value="AMELOGENIN, Y ISOFORM"/>
    <property type="match status" value="1"/>
</dbReference>
<dbReference type="Pfam" id="PF02948">
    <property type="entry name" value="Amelogenin"/>
    <property type="match status" value="1"/>
</dbReference>
<dbReference type="PRINTS" id="PR01757">
    <property type="entry name" value="AMELOGENIN"/>
</dbReference>
<dbReference type="SMART" id="SM00818">
    <property type="entry name" value="Amelogenin"/>
    <property type="match status" value="1"/>
</dbReference>
<evidence type="ECO:0000250" key="1"/>
<evidence type="ECO:0000250" key="2">
    <source>
        <dbReference type="UniProtKB" id="P02817"/>
    </source>
</evidence>
<evidence type="ECO:0000250" key="3">
    <source>
        <dbReference type="UniProtKB" id="P63277"/>
    </source>
</evidence>
<evidence type="ECO:0000250" key="4">
    <source>
        <dbReference type="UniProtKB" id="Q99217"/>
    </source>
</evidence>
<evidence type="ECO:0000256" key="5">
    <source>
        <dbReference type="SAM" id="MobiDB-lite"/>
    </source>
</evidence>
<evidence type="ECO:0000303" key="6">
    <source>
    </source>
</evidence>
<evidence type="ECO:0000303" key="7">
    <source>
    </source>
</evidence>
<evidence type="ECO:0000305" key="8"/>
<sequence>MGTWILFACLLGAAFAMPLPPHPGSPGYINLSYEKSHSQAINTDRTALVLTPLKWYQSMIRQPYPSYGYEPMGGWLHHQIIPVLSQQHPPSHTLQPHHHLPVVPAQQPVAPQQPMMPVPGHHSMTPTQHHQPNIPPSAQQPFQQPFQPQAIPPQSHQPMQPQSPLHPMQPLAPQPPLPPLFSMQPLSPILPELPLEAWPATDKTKREEVD</sequence>
<gene>
    <name type="primary">Amelx</name>
    <name type="synonym">Amel</name>
    <name type="synonym">Amgx</name>
</gene>
<organism>
    <name type="scientific">Rattus norvegicus</name>
    <name type="common">Rat</name>
    <dbReference type="NCBI Taxonomy" id="10116"/>
    <lineage>
        <taxon>Eukaryota</taxon>
        <taxon>Metazoa</taxon>
        <taxon>Chordata</taxon>
        <taxon>Craniata</taxon>
        <taxon>Vertebrata</taxon>
        <taxon>Euteleostomi</taxon>
        <taxon>Mammalia</taxon>
        <taxon>Eutheria</taxon>
        <taxon>Euarchontoglires</taxon>
        <taxon>Glires</taxon>
        <taxon>Rodentia</taxon>
        <taxon>Myomorpha</taxon>
        <taxon>Muroidea</taxon>
        <taxon>Muridae</taxon>
        <taxon>Murinae</taxon>
        <taxon>Rattus</taxon>
    </lineage>
</organism>
<comment type="function">
    <text>Plays a role in the biomineralization of teeth. Seems to regulate the formation of crystallites during the secretory stage of tooth enamel development. Thought to play a major role in the structural organization and mineralization of developing enamel.</text>
</comment>
<comment type="subunit">
    <text evidence="3">Interacts with KRT5.</text>
</comment>
<comment type="subcellular location">
    <subcellularLocation>
        <location evidence="4">Secreted</location>
        <location evidence="4">Extracellular space</location>
        <location evidence="4">Extracellular matrix</location>
    </subcellularLocation>
</comment>
<comment type="alternative products">
    <event type="alternative splicing"/>
    <isoform>
        <id>P63278-4</id>
        <name>4</name>
        <sequence type="displayed"/>
    </isoform>
    <isoform>
        <id>P63278-1</id>
        <id>P45559-1</id>
        <name>1</name>
        <sequence type="described" ref="VSP_011689"/>
    </isoform>
    <isoform>
        <id>P63278-2</id>
        <id>P45559-2</id>
        <name>2</name>
        <name>LRAP</name>
        <sequence type="described" ref="VSP_011689 VSP_011690"/>
    </isoform>
    <isoform>
        <id>P63278-3</id>
        <id>P45559-3</id>
        <name>3</name>
        <sequence type="described" ref="VSP_011689 VSP_011691"/>
    </isoform>
    <isoform>
        <id>P63278-5</id>
        <name>5</name>
        <sequence type="described" ref="VSP_011689 VSP_011692"/>
    </isoform>
    <isoform>
        <id>P63278-6</id>
        <name>6</name>
        <sequence type="described" ref="VSP_011689 VSP_011691 VSP_011692"/>
    </isoform>
    <text>Additional isoforms seem to exist.</text>
</comment>
<comment type="PTM">
    <text>Several forms are produced by C-terminal processing.</text>
</comment>
<comment type="PTM">
    <text evidence="4">Phosphorylated by FAM20C in vitro.</text>
</comment>
<comment type="similarity">
    <text evidence="8">Belongs to the amelogenin family.</text>
</comment>
<keyword id="KW-0025">Alternative splicing</keyword>
<keyword id="KW-0091">Biomineralization</keyword>
<keyword id="KW-0272">Extracellular matrix</keyword>
<keyword id="KW-0597">Phosphoprotein</keyword>
<keyword id="KW-1185">Reference proteome</keyword>
<keyword id="KW-0677">Repeat</keyword>
<keyword id="KW-0964">Secreted</keyword>
<keyword id="KW-0732">Signal</keyword>
<name>AMELX_RAT</name>